<gene>
    <name evidence="1" type="primary">pyrR</name>
    <name type="ordered locus">Npun_F2899</name>
</gene>
<comment type="function">
    <text evidence="1">Regulates the transcription of the pyrimidine nucleotide (pyr) operon in response to exogenous pyrimidines.</text>
</comment>
<comment type="function">
    <text evidence="1">Also displays a weak uracil phosphoribosyltransferase activity which is not physiologically significant.</text>
</comment>
<comment type="catalytic activity">
    <reaction evidence="1">
        <text>UMP + diphosphate = 5-phospho-alpha-D-ribose 1-diphosphate + uracil</text>
        <dbReference type="Rhea" id="RHEA:13017"/>
        <dbReference type="ChEBI" id="CHEBI:17568"/>
        <dbReference type="ChEBI" id="CHEBI:33019"/>
        <dbReference type="ChEBI" id="CHEBI:57865"/>
        <dbReference type="ChEBI" id="CHEBI:58017"/>
        <dbReference type="EC" id="2.4.2.9"/>
    </reaction>
</comment>
<comment type="similarity">
    <text evidence="1">Belongs to the purine/pyrimidine phosphoribosyltransferase family. PyrR subfamily.</text>
</comment>
<evidence type="ECO:0000255" key="1">
    <source>
        <dbReference type="HAMAP-Rule" id="MF_01219"/>
    </source>
</evidence>
<keyword id="KW-0328">Glycosyltransferase</keyword>
<keyword id="KW-1185">Reference proteome</keyword>
<keyword id="KW-0804">Transcription</keyword>
<keyword id="KW-0805">Transcription regulation</keyword>
<keyword id="KW-0808">Transferase</keyword>
<feature type="chain" id="PRO_1000139204" description="Bifunctional protein PyrR">
    <location>
        <begin position="1"/>
        <end position="178"/>
    </location>
</feature>
<feature type="short sequence motif" description="PRPP-binding" evidence="1">
    <location>
        <begin position="99"/>
        <end position="111"/>
    </location>
</feature>
<reference key="1">
    <citation type="journal article" date="2013" name="Plant Physiol.">
        <title>A Nostoc punctiforme Sugar Transporter Necessary to Establish a Cyanobacterium-Plant Symbiosis.</title>
        <authorList>
            <person name="Ekman M."/>
            <person name="Picossi S."/>
            <person name="Campbell E.L."/>
            <person name="Meeks J.C."/>
            <person name="Flores E."/>
        </authorList>
    </citation>
    <scope>NUCLEOTIDE SEQUENCE [LARGE SCALE GENOMIC DNA]</scope>
    <source>
        <strain>ATCC 29133 / PCC 73102</strain>
    </source>
</reference>
<proteinExistence type="inferred from homology"/>
<name>PYRR_NOSP7</name>
<protein>
    <recommendedName>
        <fullName evidence="1">Bifunctional protein PyrR</fullName>
    </recommendedName>
    <domain>
        <recommendedName>
            <fullName evidence="1">Pyrimidine operon regulatory protein</fullName>
        </recommendedName>
    </domain>
    <domain>
        <recommendedName>
            <fullName evidence="1">Uracil phosphoribosyltransferase</fullName>
            <shortName evidence="1">UPRTase</shortName>
            <ecNumber evidence="1">2.4.2.9</ecNumber>
        </recommendedName>
    </domain>
</protein>
<organism>
    <name type="scientific">Nostoc punctiforme (strain ATCC 29133 / PCC 73102)</name>
    <dbReference type="NCBI Taxonomy" id="63737"/>
    <lineage>
        <taxon>Bacteria</taxon>
        <taxon>Bacillati</taxon>
        <taxon>Cyanobacteriota</taxon>
        <taxon>Cyanophyceae</taxon>
        <taxon>Nostocales</taxon>
        <taxon>Nostocaceae</taxon>
        <taxon>Nostoc</taxon>
    </lineage>
</organism>
<sequence>MSAKVVEILSSEEIRRTLTRLASQIVERTRDLSQLVLLGIYTRGALLAELLARQIETLEGVAVSVGALDITFYRDDLDTIGLRTPTKSEIPFDLTGKTVVLVDDVIFKGRTIRAALNAVNDYGRPEVIRLAVLVDRGHRELPIHPDFIGKKLPTAKEEVVKVYLQNYDGRDAVELIGD</sequence>
<accession>B2IWH8</accession>
<dbReference type="EC" id="2.4.2.9" evidence="1"/>
<dbReference type="EMBL" id="CP001037">
    <property type="protein sequence ID" value="ACC81432.1"/>
    <property type="molecule type" value="Genomic_DNA"/>
</dbReference>
<dbReference type="RefSeq" id="WP_012409423.1">
    <property type="nucleotide sequence ID" value="NC_010628.1"/>
</dbReference>
<dbReference type="SMR" id="B2IWH8"/>
<dbReference type="STRING" id="63737.Npun_F2899"/>
<dbReference type="EnsemblBacteria" id="ACC81432">
    <property type="protein sequence ID" value="ACC81432"/>
    <property type="gene ID" value="Npun_F2899"/>
</dbReference>
<dbReference type="KEGG" id="npu:Npun_F2899"/>
<dbReference type="eggNOG" id="COG2065">
    <property type="taxonomic scope" value="Bacteria"/>
</dbReference>
<dbReference type="HOGENOM" id="CLU_094234_2_1_3"/>
<dbReference type="OrthoDB" id="9802227at2"/>
<dbReference type="PhylomeDB" id="B2IWH8"/>
<dbReference type="Proteomes" id="UP000001191">
    <property type="component" value="Chromosome"/>
</dbReference>
<dbReference type="GO" id="GO:0004845">
    <property type="term" value="F:uracil phosphoribosyltransferase activity"/>
    <property type="evidence" value="ECO:0007669"/>
    <property type="project" value="UniProtKB-UniRule"/>
</dbReference>
<dbReference type="GO" id="GO:0006355">
    <property type="term" value="P:regulation of DNA-templated transcription"/>
    <property type="evidence" value="ECO:0007669"/>
    <property type="project" value="UniProtKB-UniRule"/>
</dbReference>
<dbReference type="CDD" id="cd06223">
    <property type="entry name" value="PRTases_typeI"/>
    <property type="match status" value="1"/>
</dbReference>
<dbReference type="FunFam" id="3.40.50.2020:FF:000020">
    <property type="entry name" value="Bifunctional protein PyrR"/>
    <property type="match status" value="1"/>
</dbReference>
<dbReference type="Gene3D" id="3.40.50.2020">
    <property type="match status" value="1"/>
</dbReference>
<dbReference type="HAMAP" id="MF_01219">
    <property type="entry name" value="PyrR"/>
    <property type="match status" value="1"/>
</dbReference>
<dbReference type="InterPro" id="IPR000836">
    <property type="entry name" value="PRibTrfase_dom"/>
</dbReference>
<dbReference type="InterPro" id="IPR029057">
    <property type="entry name" value="PRTase-like"/>
</dbReference>
<dbReference type="InterPro" id="IPR023050">
    <property type="entry name" value="PyrR"/>
</dbReference>
<dbReference type="InterPro" id="IPR050137">
    <property type="entry name" value="PyrR_bifunctional"/>
</dbReference>
<dbReference type="NCBIfam" id="NF003545">
    <property type="entry name" value="PRK05205.1-1"/>
    <property type="match status" value="1"/>
</dbReference>
<dbReference type="NCBIfam" id="NF003549">
    <property type="entry name" value="PRK05205.1-5"/>
    <property type="match status" value="1"/>
</dbReference>
<dbReference type="PANTHER" id="PTHR11608">
    <property type="entry name" value="BIFUNCTIONAL PROTEIN PYRR"/>
    <property type="match status" value="1"/>
</dbReference>
<dbReference type="PANTHER" id="PTHR11608:SF0">
    <property type="entry name" value="BIFUNCTIONAL PROTEIN PYRR"/>
    <property type="match status" value="1"/>
</dbReference>
<dbReference type="Pfam" id="PF00156">
    <property type="entry name" value="Pribosyltran"/>
    <property type="match status" value="1"/>
</dbReference>
<dbReference type="SUPFAM" id="SSF53271">
    <property type="entry name" value="PRTase-like"/>
    <property type="match status" value="1"/>
</dbReference>